<comment type="function">
    <text evidence="1">Vacuolar aspartic endopeptidase which is probably also secreted and contributes to virulence.</text>
</comment>
<comment type="catalytic activity">
    <reaction>
        <text>Hydrolysis of proteins with broad specificity for peptide bonds. Cleaves -Leu-Leu-|-Val-Tyr- bond in a synthetic substrate. Does not act on esters of Tyr or Arg.</text>
        <dbReference type="EC" id="3.4.23.25"/>
    </reaction>
</comment>
<comment type="subcellular location">
    <subcellularLocation>
        <location evidence="1">Vacuole lumen</location>
    </subcellularLocation>
    <subcellularLocation>
        <location evidence="1">Secreted</location>
    </subcellularLocation>
</comment>
<comment type="similarity">
    <text evidence="5">Belongs to the peptidase A1 family.</text>
</comment>
<evidence type="ECO:0000250" key="1"/>
<evidence type="ECO:0000255" key="2"/>
<evidence type="ECO:0000255" key="3">
    <source>
        <dbReference type="PROSITE-ProRule" id="PRU01103"/>
    </source>
</evidence>
<evidence type="ECO:0000255" key="4">
    <source>
        <dbReference type="PROSITE-ProRule" id="PRU10094"/>
    </source>
</evidence>
<evidence type="ECO:0000305" key="5"/>
<feature type="signal peptide" evidence="2">
    <location>
        <begin position="1"/>
        <end position="18"/>
    </location>
</feature>
<feature type="propeptide" id="PRO_0000397696" description="Activation peptide" evidence="1">
    <location>
        <begin position="19"/>
        <end position="72"/>
    </location>
</feature>
<feature type="chain" id="PRO_0000397697" description="Probable vacuolar protease A">
    <location>
        <begin position="73"/>
        <end position="400"/>
    </location>
</feature>
<feature type="domain" description="Peptidase A1" evidence="3">
    <location>
        <begin position="87"/>
        <end position="397"/>
    </location>
</feature>
<feature type="active site" evidence="4">
    <location>
        <position position="105"/>
    </location>
</feature>
<feature type="active site" evidence="4">
    <location>
        <position position="289"/>
    </location>
</feature>
<feature type="glycosylation site" description="N-linked (GlcNAc...) asparagine" evidence="2">
    <location>
        <position position="140"/>
    </location>
</feature>
<feature type="glycosylation site" description="N-linked (GlcNAc...) asparagine" evidence="2">
    <location>
        <position position="340"/>
    </location>
</feature>
<feature type="disulfide bond" evidence="1">
    <location>
        <begin position="118"/>
        <end position="123"/>
    </location>
</feature>
<feature type="disulfide bond" evidence="1">
    <location>
        <begin position="323"/>
        <end position="356"/>
    </location>
</feature>
<reference key="1">
    <citation type="journal article" date="2011" name="Genome Biol.">
        <title>Comparative and functional genomics provide insights into the pathogenicity of dermatophytic fungi.</title>
        <authorList>
            <person name="Burmester A."/>
            <person name="Shelest E."/>
            <person name="Gloeckner G."/>
            <person name="Heddergott C."/>
            <person name="Schindler S."/>
            <person name="Staib P."/>
            <person name="Heidel A."/>
            <person name="Felder M."/>
            <person name="Petzold A."/>
            <person name="Szafranski K."/>
            <person name="Feuermann M."/>
            <person name="Pedruzzi I."/>
            <person name="Priebe S."/>
            <person name="Groth M."/>
            <person name="Winkler R."/>
            <person name="Li W."/>
            <person name="Kniemeyer O."/>
            <person name="Schroeckh V."/>
            <person name="Hertweck C."/>
            <person name="Hube B."/>
            <person name="White T.C."/>
            <person name="Platzer M."/>
            <person name="Guthke R."/>
            <person name="Heitman J."/>
            <person name="Woestemeyer J."/>
            <person name="Zipfel P.F."/>
            <person name="Monod M."/>
            <person name="Brakhage A.A."/>
        </authorList>
    </citation>
    <scope>NUCLEOTIDE SEQUENCE [LARGE SCALE GENOMIC DNA]</scope>
    <source>
        <strain>HKI 0517</strain>
    </source>
</reference>
<protein>
    <recommendedName>
        <fullName>Probable vacuolar protease A</fullName>
        <ecNumber>3.4.23.25</ecNumber>
    </recommendedName>
    <alternativeName>
        <fullName>Aspartic endopeptidase PEP2</fullName>
    </alternativeName>
    <alternativeName>
        <fullName>Aspartic protease PEP2</fullName>
    </alternativeName>
</protein>
<gene>
    <name type="primary">PEP2</name>
    <name type="ORF">TRV_05606</name>
</gene>
<organism>
    <name type="scientific">Trichophyton verrucosum (strain HKI 0517)</name>
    <dbReference type="NCBI Taxonomy" id="663202"/>
    <lineage>
        <taxon>Eukaryota</taxon>
        <taxon>Fungi</taxon>
        <taxon>Dikarya</taxon>
        <taxon>Ascomycota</taxon>
        <taxon>Pezizomycotina</taxon>
        <taxon>Eurotiomycetes</taxon>
        <taxon>Eurotiomycetidae</taxon>
        <taxon>Onygenales</taxon>
        <taxon>Arthrodermataceae</taxon>
        <taxon>Trichophyton</taxon>
    </lineage>
</organism>
<keyword id="KW-0064">Aspartyl protease</keyword>
<keyword id="KW-1015">Disulfide bond</keyword>
<keyword id="KW-0325">Glycoprotein</keyword>
<keyword id="KW-0378">Hydrolase</keyword>
<keyword id="KW-0645">Protease</keyword>
<keyword id="KW-0964">Secreted</keyword>
<keyword id="KW-0732">Signal</keyword>
<keyword id="KW-0926">Vacuole</keyword>
<keyword id="KW-0843">Virulence</keyword>
<keyword id="KW-0865">Zymogen</keyword>
<accession>D4DEN7</accession>
<sequence length="400" mass="43361">MKGSLLLAGATLLGCTSAKLHSLKLKKVSLKEQLEHADIDVQIKSLGQKYMGIRPEQHEQQMFKEQTPIEAESGHNVLIDNFLNAQYFSEISIGTPPQTFKVVLDTGSSNLWVPGKDCSSIACFLHSTYDSSASSTYSKNGTKFAIRYGSGSLEGFVSQDSVKIGDMTIKNQLFAEATSEPGLAFAFGRFDGIMGMGFSSISVNGITPPFYNMIDQGLIDEPVFSFYLGDTNKEGDQSVVTFGGSDTKHFTGDMTTIPLRRKAYWEVDFDAISLGEDTAALENTGIILDTGTSLIALPTTLAEMINTQIGATKSWNGQYTLDCAKRDSLPDVTFTVSGHNFTIGPHDYTLEVSGTCISSFMGMDFPEPVGPLAILGDSFLRRYYSVYDLGKGTVGLAKAK</sequence>
<name>CARP_TRIVH</name>
<proteinExistence type="inferred from homology"/>
<dbReference type="EC" id="3.4.23.25"/>
<dbReference type="EMBL" id="ACYE01000304">
    <property type="protein sequence ID" value="EFE39677.1"/>
    <property type="molecule type" value="Genomic_DNA"/>
</dbReference>
<dbReference type="RefSeq" id="XP_003020295.1">
    <property type="nucleotide sequence ID" value="XM_003020249.1"/>
</dbReference>
<dbReference type="SMR" id="D4DEN7"/>
<dbReference type="MEROPS" id="A01.018"/>
<dbReference type="GlyCosmos" id="D4DEN7">
    <property type="glycosylation" value="2 sites, No reported glycans"/>
</dbReference>
<dbReference type="GeneID" id="9584044"/>
<dbReference type="KEGG" id="tve:TRV_05606"/>
<dbReference type="HOGENOM" id="CLU_013253_3_4_1"/>
<dbReference type="OrthoDB" id="3464at34384"/>
<dbReference type="Proteomes" id="UP000008383">
    <property type="component" value="Unassembled WGS sequence"/>
</dbReference>
<dbReference type="GO" id="GO:0005576">
    <property type="term" value="C:extracellular region"/>
    <property type="evidence" value="ECO:0007669"/>
    <property type="project" value="UniProtKB-SubCell"/>
</dbReference>
<dbReference type="GO" id="GO:0000324">
    <property type="term" value="C:fungal-type vacuole"/>
    <property type="evidence" value="ECO:0007669"/>
    <property type="project" value="TreeGrafter"/>
</dbReference>
<dbReference type="GO" id="GO:0005775">
    <property type="term" value="C:vacuolar lumen"/>
    <property type="evidence" value="ECO:0007669"/>
    <property type="project" value="UniProtKB-SubCell"/>
</dbReference>
<dbReference type="GO" id="GO:0004190">
    <property type="term" value="F:aspartic-type endopeptidase activity"/>
    <property type="evidence" value="ECO:0007669"/>
    <property type="project" value="UniProtKB-KW"/>
</dbReference>
<dbReference type="GO" id="GO:0006508">
    <property type="term" value="P:proteolysis"/>
    <property type="evidence" value="ECO:0007669"/>
    <property type="project" value="UniProtKB-KW"/>
</dbReference>
<dbReference type="FunFam" id="2.40.70.10:FF:000036">
    <property type="entry name" value="Vacuolar aspartic protease"/>
    <property type="match status" value="1"/>
</dbReference>
<dbReference type="FunFam" id="2.40.70.10:FF:000002">
    <property type="entry name" value="Vacuolar aspartic proteinase"/>
    <property type="match status" value="1"/>
</dbReference>
<dbReference type="Gene3D" id="2.40.70.10">
    <property type="entry name" value="Acid Proteases"/>
    <property type="match status" value="2"/>
</dbReference>
<dbReference type="InterPro" id="IPR001461">
    <property type="entry name" value="Aspartic_peptidase_A1"/>
</dbReference>
<dbReference type="InterPro" id="IPR001969">
    <property type="entry name" value="Aspartic_peptidase_AS"/>
</dbReference>
<dbReference type="InterPro" id="IPR033121">
    <property type="entry name" value="PEPTIDASE_A1"/>
</dbReference>
<dbReference type="InterPro" id="IPR021109">
    <property type="entry name" value="Peptidase_aspartic_dom_sf"/>
</dbReference>
<dbReference type="PANTHER" id="PTHR47966">
    <property type="entry name" value="BETA-SITE APP-CLEAVING ENZYME, ISOFORM A-RELATED"/>
    <property type="match status" value="1"/>
</dbReference>
<dbReference type="PANTHER" id="PTHR47966:SF51">
    <property type="entry name" value="BETA-SITE APP-CLEAVING ENZYME, ISOFORM A-RELATED"/>
    <property type="match status" value="1"/>
</dbReference>
<dbReference type="Pfam" id="PF00026">
    <property type="entry name" value="Asp"/>
    <property type="match status" value="1"/>
</dbReference>
<dbReference type="PRINTS" id="PR00792">
    <property type="entry name" value="PEPSIN"/>
</dbReference>
<dbReference type="SUPFAM" id="SSF50630">
    <property type="entry name" value="Acid proteases"/>
    <property type="match status" value="1"/>
</dbReference>
<dbReference type="PROSITE" id="PS00141">
    <property type="entry name" value="ASP_PROTEASE"/>
    <property type="match status" value="2"/>
</dbReference>
<dbReference type="PROSITE" id="PS51767">
    <property type="entry name" value="PEPTIDASE_A1"/>
    <property type="match status" value="1"/>
</dbReference>